<protein>
    <recommendedName>
        <fullName>Membrane progestin receptor beta</fullName>
        <shortName>mPR beta</shortName>
    </recommendedName>
    <alternativeName>
        <fullName>Progestin and adipoQ receptor family member VIII</fullName>
    </alternativeName>
</protein>
<dbReference type="EMBL" id="AF313615">
    <property type="protein sequence ID" value="AAO47228.1"/>
    <property type="molecule type" value="mRNA"/>
</dbReference>
<dbReference type="RefSeq" id="NP_998905.1">
    <property type="nucleotide sequence ID" value="NM_213740.1"/>
</dbReference>
<dbReference type="RefSeq" id="XP_005666525.1">
    <property type="nucleotide sequence ID" value="XM_005666468.2"/>
</dbReference>
<dbReference type="SMR" id="Q865K9"/>
<dbReference type="FunCoup" id="Q865K9">
    <property type="interactions" value="229"/>
</dbReference>
<dbReference type="STRING" id="9823.ENSSSCP00000053315"/>
<dbReference type="PaxDb" id="9823-ENSSSCP00000001907"/>
<dbReference type="Ensembl" id="ENSSSCT00000001956.4">
    <property type="protein sequence ID" value="ENSSSCP00000001907.1"/>
    <property type="gene ID" value="ENSSSCG00000001750.4"/>
</dbReference>
<dbReference type="Ensembl" id="ENSSSCT00015021202.1">
    <property type="protein sequence ID" value="ENSSSCP00015008333.1"/>
    <property type="gene ID" value="ENSSSCG00015015873.1"/>
</dbReference>
<dbReference type="Ensembl" id="ENSSSCT00015021221.1">
    <property type="protein sequence ID" value="ENSSSCP00015008341.1"/>
    <property type="gene ID" value="ENSSSCG00015015873.1"/>
</dbReference>
<dbReference type="Ensembl" id="ENSSSCT00025065790.1">
    <property type="protein sequence ID" value="ENSSSCP00025028073.1"/>
    <property type="gene ID" value="ENSSSCG00025048338.1"/>
</dbReference>
<dbReference type="Ensembl" id="ENSSSCT00025065853.1">
    <property type="protein sequence ID" value="ENSSSCP00025028105.1"/>
    <property type="gene ID" value="ENSSSCG00025048338.1"/>
</dbReference>
<dbReference type="Ensembl" id="ENSSSCT00030045778.1">
    <property type="protein sequence ID" value="ENSSSCP00030020619.1"/>
    <property type="gene ID" value="ENSSSCG00030033056.1"/>
</dbReference>
<dbReference type="Ensembl" id="ENSSSCT00030045800.1">
    <property type="protein sequence ID" value="ENSSSCP00030020628.1"/>
    <property type="gene ID" value="ENSSSCG00030033056.1"/>
</dbReference>
<dbReference type="Ensembl" id="ENSSSCT00035086430.1">
    <property type="protein sequence ID" value="ENSSSCP00035036004.1"/>
    <property type="gene ID" value="ENSSSCG00035064220.1"/>
</dbReference>
<dbReference type="Ensembl" id="ENSSSCT00035086434.1">
    <property type="protein sequence ID" value="ENSSSCP00035036006.1"/>
    <property type="gene ID" value="ENSSSCG00035064220.1"/>
</dbReference>
<dbReference type="Ensembl" id="ENSSSCT00040020364.1">
    <property type="protein sequence ID" value="ENSSSCP00040008529.1"/>
    <property type="gene ID" value="ENSSSCG00040015133.1"/>
</dbReference>
<dbReference type="Ensembl" id="ENSSSCT00040020371.1">
    <property type="protein sequence ID" value="ENSSSCP00040008532.1"/>
    <property type="gene ID" value="ENSSSCG00040015133.1"/>
</dbReference>
<dbReference type="Ensembl" id="ENSSSCT00045005435.1">
    <property type="protein sequence ID" value="ENSSSCP00045003632.1"/>
    <property type="gene ID" value="ENSSSCG00045003327.1"/>
</dbReference>
<dbReference type="Ensembl" id="ENSSSCT00045005442.1">
    <property type="protein sequence ID" value="ENSSSCP00045003638.1"/>
    <property type="gene ID" value="ENSSSCG00045003327.1"/>
</dbReference>
<dbReference type="Ensembl" id="ENSSSCT00050002338.1">
    <property type="protein sequence ID" value="ENSSSCP00050000714.1"/>
    <property type="gene ID" value="ENSSSCG00050001839.1"/>
</dbReference>
<dbReference type="Ensembl" id="ENSSSCT00050002350.1">
    <property type="protein sequence ID" value="ENSSSCP00050000719.1"/>
    <property type="gene ID" value="ENSSSCG00050001839.1"/>
</dbReference>
<dbReference type="Ensembl" id="ENSSSCT00055026468.1">
    <property type="protein sequence ID" value="ENSSSCP00055021032.1"/>
    <property type="gene ID" value="ENSSSCG00055013439.1"/>
</dbReference>
<dbReference type="Ensembl" id="ENSSSCT00055026492.1">
    <property type="protein sequence ID" value="ENSSSCP00055021053.1"/>
    <property type="gene ID" value="ENSSSCG00055013439.1"/>
</dbReference>
<dbReference type="Ensembl" id="ENSSSCT00060064119.1">
    <property type="protein sequence ID" value="ENSSSCP00060027497.1"/>
    <property type="gene ID" value="ENSSSCG00060047213.1"/>
</dbReference>
<dbReference type="Ensembl" id="ENSSSCT00060064122.1">
    <property type="protein sequence ID" value="ENSSSCP00060027498.1"/>
    <property type="gene ID" value="ENSSSCG00060047213.1"/>
</dbReference>
<dbReference type="Ensembl" id="ENSSSCT00065105961.1">
    <property type="protein sequence ID" value="ENSSSCP00065047075.1"/>
    <property type="gene ID" value="ENSSSCG00065076681.1"/>
</dbReference>
<dbReference type="Ensembl" id="ENSSSCT00065105964.1">
    <property type="protein sequence ID" value="ENSSSCP00065047076.1"/>
    <property type="gene ID" value="ENSSSCG00065076681.1"/>
</dbReference>
<dbReference type="Ensembl" id="ENSSSCT00070017875.1">
    <property type="protein sequence ID" value="ENSSSCP00070014833.1"/>
    <property type="gene ID" value="ENSSSCG00070009207.1"/>
</dbReference>
<dbReference type="Ensembl" id="ENSSSCT00085050968">
    <property type="protein sequence ID" value="ENSSSCP00085035725"/>
    <property type="gene ID" value="ENSSSCG00085026538"/>
</dbReference>
<dbReference type="Ensembl" id="ENSSSCT00085050973">
    <property type="protein sequence ID" value="ENSSSCP00085035729"/>
    <property type="gene ID" value="ENSSSCG00085026538"/>
</dbReference>
<dbReference type="Ensembl" id="ENSSSCT00085050987">
    <property type="protein sequence ID" value="ENSSSCP00085035744"/>
    <property type="gene ID" value="ENSSSCG00085026538"/>
</dbReference>
<dbReference type="Ensembl" id="ENSSSCT00090039025">
    <property type="protein sequence ID" value="ENSSSCP00090024274"/>
    <property type="gene ID" value="ENSSSCG00090022027"/>
</dbReference>
<dbReference type="Ensembl" id="ENSSSCT00090039036">
    <property type="protein sequence ID" value="ENSSSCP00090024280"/>
    <property type="gene ID" value="ENSSSCG00090022027"/>
</dbReference>
<dbReference type="Ensembl" id="ENSSSCT00090039040">
    <property type="protein sequence ID" value="ENSSSCP00090024282"/>
    <property type="gene ID" value="ENSSSCG00090022027"/>
</dbReference>
<dbReference type="Ensembl" id="ENSSSCT00090039051">
    <property type="protein sequence ID" value="ENSSSCP00090024289"/>
    <property type="gene ID" value="ENSSSCG00090022027"/>
</dbReference>
<dbReference type="Ensembl" id="ENSSSCT00105003509">
    <property type="protein sequence ID" value="ENSSSCP00105002618"/>
    <property type="gene ID" value="ENSSSCG00105001821"/>
</dbReference>
<dbReference type="Ensembl" id="ENSSSCT00105003549">
    <property type="protein sequence ID" value="ENSSSCP00105002646"/>
    <property type="gene ID" value="ENSSSCG00105001821"/>
</dbReference>
<dbReference type="Ensembl" id="ENSSSCT00105003562">
    <property type="protein sequence ID" value="ENSSSCP00105002655"/>
    <property type="gene ID" value="ENSSSCG00105001821"/>
</dbReference>
<dbReference type="Ensembl" id="ENSSSCT00110021142">
    <property type="protein sequence ID" value="ENSSSCP00110014259"/>
    <property type="gene ID" value="ENSSSCG00110011034"/>
</dbReference>
<dbReference type="Ensembl" id="ENSSSCT00110021162">
    <property type="protein sequence ID" value="ENSSSCP00110014269"/>
    <property type="gene ID" value="ENSSSCG00110011034"/>
</dbReference>
<dbReference type="Ensembl" id="ENSSSCT00110021165">
    <property type="protein sequence ID" value="ENSSSCP00110014271"/>
    <property type="gene ID" value="ENSSSCG00110011034"/>
</dbReference>
<dbReference type="Ensembl" id="ENSSSCT00110021177">
    <property type="protein sequence ID" value="ENSSSCP00110014279"/>
    <property type="gene ID" value="ENSSSCG00110011034"/>
</dbReference>
<dbReference type="Ensembl" id="ENSSSCT00110021195">
    <property type="protein sequence ID" value="ENSSSCP00110014289"/>
    <property type="gene ID" value="ENSSSCG00110011034"/>
</dbReference>
<dbReference type="Ensembl" id="ENSSSCT00115013984">
    <property type="protein sequence ID" value="ENSSSCP00115013206"/>
    <property type="gene ID" value="ENSSSCG00115008010"/>
</dbReference>
<dbReference type="Ensembl" id="ENSSSCT00130049257">
    <property type="protein sequence ID" value="ENSSSCP00130034871"/>
    <property type="gene ID" value="ENSSSCG00130025381"/>
</dbReference>
<dbReference type="Ensembl" id="ENSSSCT00130049297">
    <property type="protein sequence ID" value="ENSSSCP00130034903"/>
    <property type="gene ID" value="ENSSSCG00130025381"/>
</dbReference>
<dbReference type="Ensembl" id="ENSSSCT00130049307">
    <property type="protein sequence ID" value="ENSSSCP00130034911"/>
    <property type="gene ID" value="ENSSSCG00130025381"/>
</dbReference>
<dbReference type="Ensembl" id="ENSSSCT00130049334">
    <property type="protein sequence ID" value="ENSSSCP00130034934"/>
    <property type="gene ID" value="ENSSSCG00130025381"/>
</dbReference>
<dbReference type="GeneID" id="396559"/>
<dbReference type="KEGG" id="ssc:396559"/>
<dbReference type="CTD" id="85315"/>
<dbReference type="VGNC" id="VGNC:91178">
    <property type="gene designation" value="PAQR8"/>
</dbReference>
<dbReference type="eggNOG" id="KOG0748">
    <property type="taxonomic scope" value="Eukaryota"/>
</dbReference>
<dbReference type="GeneTree" id="ENSGT00940000159860"/>
<dbReference type="HOGENOM" id="CLU_052356_0_0_1"/>
<dbReference type="InParanoid" id="Q865K9"/>
<dbReference type="OMA" id="QYGCSLG"/>
<dbReference type="OrthoDB" id="535992at2759"/>
<dbReference type="TreeFam" id="TF319738"/>
<dbReference type="Proteomes" id="UP000008227">
    <property type="component" value="Chromosome 7"/>
</dbReference>
<dbReference type="Proteomes" id="UP000314985">
    <property type="component" value="Chromosome 7"/>
</dbReference>
<dbReference type="Proteomes" id="UP000694570">
    <property type="component" value="Unplaced"/>
</dbReference>
<dbReference type="Proteomes" id="UP000694571">
    <property type="component" value="Unplaced"/>
</dbReference>
<dbReference type="Proteomes" id="UP000694720">
    <property type="component" value="Unplaced"/>
</dbReference>
<dbReference type="Proteomes" id="UP000694722">
    <property type="component" value="Unplaced"/>
</dbReference>
<dbReference type="Proteomes" id="UP000694723">
    <property type="component" value="Unplaced"/>
</dbReference>
<dbReference type="Proteomes" id="UP000694724">
    <property type="component" value="Unplaced"/>
</dbReference>
<dbReference type="Proteomes" id="UP000694725">
    <property type="component" value="Unplaced"/>
</dbReference>
<dbReference type="Proteomes" id="UP000694726">
    <property type="component" value="Unplaced"/>
</dbReference>
<dbReference type="Proteomes" id="UP000694727">
    <property type="component" value="Unplaced"/>
</dbReference>
<dbReference type="Proteomes" id="UP000694728">
    <property type="component" value="Unplaced"/>
</dbReference>
<dbReference type="Bgee" id="ENSSSCG00000001750">
    <property type="expression patterns" value="Expressed in hypothalamus and 43 other cell types or tissues"/>
</dbReference>
<dbReference type="ExpressionAtlas" id="Q865K9">
    <property type="expression patterns" value="baseline and differential"/>
</dbReference>
<dbReference type="GO" id="GO:0005886">
    <property type="term" value="C:plasma membrane"/>
    <property type="evidence" value="ECO:0000318"/>
    <property type="project" value="GO_Central"/>
</dbReference>
<dbReference type="GO" id="GO:0003707">
    <property type="term" value="F:nuclear steroid receptor activity"/>
    <property type="evidence" value="ECO:0000318"/>
    <property type="project" value="GO_Central"/>
</dbReference>
<dbReference type="GO" id="GO:0005496">
    <property type="term" value="F:steroid binding"/>
    <property type="evidence" value="ECO:0000318"/>
    <property type="project" value="GO_Central"/>
</dbReference>
<dbReference type="GO" id="GO:0048477">
    <property type="term" value="P:oogenesis"/>
    <property type="evidence" value="ECO:0007669"/>
    <property type="project" value="UniProtKB-KW"/>
</dbReference>
<dbReference type="GO" id="GO:0048545">
    <property type="term" value="P:response to steroid hormone"/>
    <property type="evidence" value="ECO:0000318"/>
    <property type="project" value="GO_Central"/>
</dbReference>
<dbReference type="InterPro" id="IPR004254">
    <property type="entry name" value="AdipoR/HlyIII-related"/>
</dbReference>
<dbReference type="PANTHER" id="PTHR20855">
    <property type="entry name" value="ADIPOR/PROGESTIN RECEPTOR-RELATED"/>
    <property type="match status" value="1"/>
</dbReference>
<dbReference type="PANTHER" id="PTHR20855:SF22">
    <property type="entry name" value="MEMBRANE PROGESTIN RECEPTOR BETA"/>
    <property type="match status" value="1"/>
</dbReference>
<dbReference type="Pfam" id="PF03006">
    <property type="entry name" value="HlyIII"/>
    <property type="match status" value="1"/>
</dbReference>
<feature type="chain" id="PRO_0000218842" description="Membrane progestin receptor beta">
    <location>
        <begin position="1"/>
        <end position="354"/>
    </location>
</feature>
<feature type="topological domain" description="Cytoplasmic" evidence="2">
    <location>
        <begin position="1"/>
        <end position="75"/>
    </location>
</feature>
<feature type="transmembrane region" description="Helical; Name=1" evidence="2">
    <location>
        <begin position="76"/>
        <end position="96"/>
    </location>
</feature>
<feature type="topological domain" description="Extracellular" evidence="2">
    <location>
        <begin position="97"/>
        <end position="111"/>
    </location>
</feature>
<feature type="transmembrane region" description="Helical; Name=2" evidence="2">
    <location>
        <begin position="112"/>
        <end position="132"/>
    </location>
</feature>
<feature type="topological domain" description="Cytoplasmic" evidence="2">
    <location>
        <begin position="133"/>
        <end position="174"/>
    </location>
</feature>
<feature type="transmembrane region" description="Helical; Name=3" evidence="2">
    <location>
        <begin position="175"/>
        <end position="195"/>
    </location>
</feature>
<feature type="topological domain" description="Extracellular" evidence="2">
    <location>
        <begin position="196"/>
        <end position="213"/>
    </location>
</feature>
<feature type="transmembrane region" description="Helical; Name=4" evidence="2">
    <location>
        <begin position="214"/>
        <end position="234"/>
    </location>
</feature>
<feature type="topological domain" description="Cytoplasmic" evidence="2">
    <location>
        <begin position="235"/>
        <end position="243"/>
    </location>
</feature>
<feature type="transmembrane region" description="Helical; Name=5" evidence="2">
    <location>
        <begin position="244"/>
        <end position="264"/>
    </location>
</feature>
<feature type="topological domain" description="Extracellular" evidence="2">
    <location>
        <begin position="265"/>
        <end position="283"/>
    </location>
</feature>
<feature type="transmembrane region" description="Helical; Name=6" evidence="2">
    <location>
        <begin position="284"/>
        <end position="304"/>
    </location>
</feature>
<feature type="topological domain" description="Cytoplasmic" evidence="2">
    <location>
        <begin position="305"/>
        <end position="319"/>
    </location>
</feature>
<feature type="transmembrane region" description="Helical; Name=7" evidence="2">
    <location>
        <begin position="320"/>
        <end position="340"/>
    </location>
</feature>
<feature type="topological domain" description="Extracellular" evidence="2">
    <location>
        <begin position="341"/>
        <end position="354"/>
    </location>
</feature>
<gene>
    <name type="primary">PAQR8</name>
    <name type="synonym">MPRB</name>
</gene>
<name>MPRB_PIG</name>
<reference key="1">
    <citation type="journal article" date="2003" name="Proc. Natl. Acad. Sci. U.S.A.">
        <title>Identification, classification, and partial characterization of genes in humans and other vertebrates homologous to a fish membrane progestin receptor.</title>
        <authorList>
            <person name="Zhu Y."/>
            <person name="Bond J."/>
            <person name="Thomas P."/>
        </authorList>
    </citation>
    <scope>NUCLEOTIDE SEQUENCE [MRNA]</scope>
    <source>
        <tissue>Small intestine</tissue>
    </source>
</reference>
<accession>Q865K9</accession>
<keyword id="KW-1003">Cell membrane</keyword>
<keyword id="KW-0217">Developmental protein</keyword>
<keyword id="KW-0221">Differentiation</keyword>
<keyword id="KW-0446">Lipid-binding</keyword>
<keyword id="KW-0472">Membrane</keyword>
<keyword id="KW-0896">Oogenesis</keyword>
<keyword id="KW-0675">Receptor</keyword>
<keyword id="KW-1185">Reference proteome</keyword>
<keyword id="KW-0754">Steroid-binding</keyword>
<keyword id="KW-0812">Transmembrane</keyword>
<keyword id="KW-1133">Transmembrane helix</keyword>
<comment type="function">
    <text evidence="1">Steroid membrane receptor. Binds progesterone. May be involved in oocyte maturation (By similarity).</text>
</comment>
<comment type="subcellular location">
    <subcellularLocation>
        <location evidence="1">Cell membrane</location>
        <topology evidence="1">Multi-pass membrane protein</topology>
    </subcellularLocation>
</comment>
<comment type="similarity">
    <text evidence="3">Belongs to the ADIPOR family.</text>
</comment>
<proteinExistence type="evidence at transcript level"/>
<evidence type="ECO:0000250" key="1"/>
<evidence type="ECO:0000255" key="2"/>
<evidence type="ECO:0000305" key="3"/>
<organism>
    <name type="scientific">Sus scrofa</name>
    <name type="common">Pig</name>
    <dbReference type="NCBI Taxonomy" id="9823"/>
    <lineage>
        <taxon>Eukaryota</taxon>
        <taxon>Metazoa</taxon>
        <taxon>Chordata</taxon>
        <taxon>Craniata</taxon>
        <taxon>Vertebrata</taxon>
        <taxon>Euteleostomi</taxon>
        <taxon>Mammalia</taxon>
        <taxon>Eutheria</taxon>
        <taxon>Laurasiatheria</taxon>
        <taxon>Artiodactyla</taxon>
        <taxon>Suina</taxon>
        <taxon>Suidae</taxon>
        <taxon>Sus</taxon>
    </lineage>
</organism>
<sequence length="354" mass="40581">MTTAILQRLSTLSVSGQHLRRLPKILEDGLPKMPGTVPETDVPQLFREPYIRAGYRPIGHEWRYYFFSLFQKHNEVVNVWTHLLAALAVLLRFWAFVETEGLPWTSAHTLPLLLYVLSSITYLTFSLLAHLLQSKSELSHYTFYFVDYVGVSVYQYGSALVHFFYASDQAWYERFWLFFLPAAAFCGWLSCTGCCYAKYRYRRPYPVMRKVCQVVPAGLAFILDISPVAHRVALCHLSGCQEQAAWYHTLQIVFFLVSAYFFSCPVPEKYFPGSCDIVGHGHQIFHAFLSICTLSQLEAILLDYKGRQEIFLHRHSPLSIYAACLSFFFLVACSGATAALLREKIKARLSKKDS</sequence>